<comment type="subcellular location">
    <subcellularLocation>
        <location evidence="1">Secreted</location>
    </subcellularLocation>
</comment>
<comment type="tissue specificity">
    <text evidence="4">Expressed by the venom gland.</text>
</comment>
<comment type="similarity">
    <text evidence="3">Belongs to the MIT-like AcTx family.</text>
</comment>
<reference key="1">
    <citation type="journal article" date="2005" name="Peptides">
        <title>Discovery of an MIT-like atracotoxin family: spider venom peptides that share sequence homology but not pharmacological properties with AVIT family proteins.</title>
        <authorList>
            <person name="Wen S."/>
            <person name="Wilson D.T."/>
            <person name="Kuruppu S."/>
            <person name="Korsinczky M.L."/>
            <person name="Hedrick J."/>
            <person name="Pang L."/>
            <person name="Szeto T."/>
            <person name="Hodgson W.C."/>
            <person name="Alewood P.F."/>
            <person name="Nicholson G.M."/>
        </authorList>
    </citation>
    <scope>NUCLEOTIDE SEQUENCE [MRNA]</scope>
    <scope>PROTEIN SEQUENCE OF 19-55</scope>
    <scope>SUBCELLULAR LOCATION</scope>
    <source>
        <tissue>Venom</tissue>
        <tissue>Venom gland</tissue>
    </source>
</reference>
<evidence type="ECO:0000269" key="1">
    <source>
    </source>
</evidence>
<evidence type="ECO:0000303" key="2">
    <source>
    </source>
</evidence>
<evidence type="ECO:0000305" key="3"/>
<evidence type="ECO:0000305" key="4">
    <source>
    </source>
</evidence>
<keyword id="KW-0903">Direct protein sequencing</keyword>
<keyword id="KW-1015">Disulfide bond</keyword>
<keyword id="KW-0964">Secreted</keyword>
<keyword id="KW-0732">Signal</keyword>
<sequence>MLKFVVVICLVIMAITFAEKCGDQECGEGTCCLDYSQQHCSRLGKLYDMCSDPNDKTDSGSHIFFCQCETGLRCDKTSWSCQKG</sequence>
<feature type="signal peptide" evidence="1">
    <location>
        <begin position="1"/>
        <end position="18"/>
    </location>
</feature>
<feature type="chain" id="PRO_0000265768" description="U1-hexatoxin-Iw1a">
    <location>
        <begin position="19"/>
        <end position="84"/>
    </location>
</feature>
<feature type="disulfide bond" evidence="4">
    <location>
        <begin position="21"/>
        <end position="32"/>
    </location>
</feature>
<feature type="disulfide bond" evidence="4">
    <location>
        <begin position="26"/>
        <end position="40"/>
    </location>
</feature>
<feature type="disulfide bond" evidence="4">
    <location>
        <begin position="31"/>
        <end position="66"/>
    </location>
</feature>
<feature type="disulfide bond" evidence="4">
    <location>
        <begin position="50"/>
        <end position="74"/>
    </location>
</feature>
<feature type="disulfide bond" evidence="4">
    <location>
        <begin position="68"/>
        <end position="81"/>
    </location>
</feature>
<accession>Q5D231</accession>
<dbReference type="EMBL" id="AY914165">
    <property type="protein sequence ID" value="AAX11345.1"/>
    <property type="molecule type" value="mRNA"/>
</dbReference>
<dbReference type="SMR" id="Q5D231"/>
<dbReference type="ArachnoServer" id="AS000601">
    <property type="toxin name" value="U1-hexatoxin-Iw1a"/>
</dbReference>
<dbReference type="GO" id="GO:0005576">
    <property type="term" value="C:extracellular region"/>
    <property type="evidence" value="ECO:0007669"/>
    <property type="project" value="UniProtKB-SubCell"/>
</dbReference>
<dbReference type="Gene3D" id="2.10.80.10">
    <property type="entry name" value="Lipase, subunit A"/>
    <property type="match status" value="1"/>
</dbReference>
<dbReference type="InterPro" id="IPR020202">
    <property type="entry name" value="Atracotoxin"/>
</dbReference>
<dbReference type="Pfam" id="PF17556">
    <property type="entry name" value="MIT_LIKE_ACTX"/>
    <property type="match status" value="1"/>
</dbReference>
<organism>
    <name type="scientific">Illawarra wisharti</name>
    <name type="common">Illawarra funnel-web spider</name>
    <dbReference type="NCBI Taxonomy" id="278061"/>
    <lineage>
        <taxon>Eukaryota</taxon>
        <taxon>Metazoa</taxon>
        <taxon>Ecdysozoa</taxon>
        <taxon>Arthropoda</taxon>
        <taxon>Chelicerata</taxon>
        <taxon>Arachnida</taxon>
        <taxon>Araneae</taxon>
        <taxon>Mygalomorphae</taxon>
        <taxon>Hexathelidae</taxon>
        <taxon>Hadronyche</taxon>
    </lineage>
</organism>
<protein>
    <recommendedName>
        <fullName>U1-hexatoxin-Iw1a</fullName>
        <shortName>U1-HXTX-Iw1a</shortName>
    </recommendedName>
    <alternativeName>
        <fullName evidence="2">Atracotoxin-Hs20f7358</fullName>
        <shortName evidence="2">AcTx-Hs20f7358</shortName>
    </alternativeName>
</protein>
<proteinExistence type="evidence at protein level"/>
<name>T7358_ILLWI</name>